<protein>
    <recommendedName>
        <fullName evidence="1">UDP-2,3-diacylglucosamine hydrolase</fullName>
        <ecNumber evidence="1">3.6.1.54</ecNumber>
    </recommendedName>
    <alternativeName>
        <fullName evidence="1">UDP-2,3-diacylglucosamine diphosphatase</fullName>
    </alternativeName>
</protein>
<organism>
    <name type="scientific">Yersinia pestis bv. Antiqua (strain Nepal516)</name>
    <dbReference type="NCBI Taxonomy" id="377628"/>
    <lineage>
        <taxon>Bacteria</taxon>
        <taxon>Pseudomonadati</taxon>
        <taxon>Pseudomonadota</taxon>
        <taxon>Gammaproteobacteria</taxon>
        <taxon>Enterobacterales</taxon>
        <taxon>Yersiniaceae</taxon>
        <taxon>Yersinia</taxon>
    </lineage>
</organism>
<evidence type="ECO:0000255" key="1">
    <source>
        <dbReference type="HAMAP-Rule" id="MF_00575"/>
    </source>
</evidence>
<feature type="chain" id="PRO_1000025101" description="UDP-2,3-diacylglucosamine hydrolase">
    <location>
        <begin position="1"/>
        <end position="240"/>
    </location>
</feature>
<feature type="binding site" evidence="1">
    <location>
        <position position="8"/>
    </location>
    <ligand>
        <name>Mn(2+)</name>
        <dbReference type="ChEBI" id="CHEBI:29035"/>
        <label>1</label>
    </ligand>
</feature>
<feature type="binding site" evidence="1">
    <location>
        <position position="10"/>
    </location>
    <ligand>
        <name>Mn(2+)</name>
        <dbReference type="ChEBI" id="CHEBI:29035"/>
        <label>1</label>
    </ligand>
</feature>
<feature type="binding site" evidence="1">
    <location>
        <position position="41"/>
    </location>
    <ligand>
        <name>Mn(2+)</name>
        <dbReference type="ChEBI" id="CHEBI:29035"/>
        <label>1</label>
    </ligand>
</feature>
<feature type="binding site" evidence="1">
    <location>
        <position position="41"/>
    </location>
    <ligand>
        <name>Mn(2+)</name>
        <dbReference type="ChEBI" id="CHEBI:29035"/>
        <label>2</label>
    </ligand>
</feature>
<feature type="binding site" evidence="1">
    <location>
        <begin position="79"/>
        <end position="80"/>
    </location>
    <ligand>
        <name>substrate</name>
    </ligand>
</feature>
<feature type="binding site" evidence="1">
    <location>
        <position position="79"/>
    </location>
    <ligand>
        <name>Mn(2+)</name>
        <dbReference type="ChEBI" id="CHEBI:29035"/>
        <label>2</label>
    </ligand>
</feature>
<feature type="binding site" evidence="1">
    <location>
        <position position="114"/>
    </location>
    <ligand>
        <name>Mn(2+)</name>
        <dbReference type="ChEBI" id="CHEBI:29035"/>
        <label>2</label>
    </ligand>
</feature>
<feature type="binding site" evidence="1">
    <location>
        <position position="122"/>
    </location>
    <ligand>
        <name>substrate</name>
    </ligand>
</feature>
<feature type="binding site" evidence="1">
    <location>
        <position position="160"/>
    </location>
    <ligand>
        <name>substrate</name>
    </ligand>
</feature>
<feature type="binding site" evidence="1">
    <location>
        <position position="164"/>
    </location>
    <ligand>
        <name>substrate</name>
    </ligand>
</feature>
<feature type="binding site" evidence="1">
    <location>
        <position position="167"/>
    </location>
    <ligand>
        <name>substrate</name>
    </ligand>
</feature>
<feature type="binding site" evidence="1">
    <location>
        <position position="195"/>
    </location>
    <ligand>
        <name>Mn(2+)</name>
        <dbReference type="ChEBI" id="CHEBI:29035"/>
        <label>2</label>
    </ligand>
</feature>
<feature type="binding site" evidence="1">
    <location>
        <position position="195"/>
    </location>
    <ligand>
        <name>substrate</name>
    </ligand>
</feature>
<feature type="binding site" evidence="1">
    <location>
        <position position="197"/>
    </location>
    <ligand>
        <name>Mn(2+)</name>
        <dbReference type="ChEBI" id="CHEBI:29035"/>
        <label>1</label>
    </ligand>
</feature>
<sequence length="240" mass="27444">MSTLFIADLHLSVQEPAITAGFLHFIQREAIHADALYILGDLFESWIGDDDPEPLYRQVAAALKSLQQQGVPCYFIHGNRDFLLGKRFAEESGMVLLPEENVVELYGRKILILHGDTLCTDDTDYQHFRKKVHNPLIQKLFLWIPLRLRLRIAAYMRNKSQQNNSGKSERIMDVNSKAVIDAFLRHDVSWMIHGHTHRPAIHSVELPMVTAHRVVLGAWHVEGSMVKVTADNVELITFPF</sequence>
<accession>Q1CKY3</accession>
<accession>C4GQU0</accession>
<comment type="function">
    <text evidence="1">Hydrolyzes the pyrophosphate bond of UDP-2,3-diacylglucosamine to yield 2,3-diacylglucosamine 1-phosphate (lipid X) and UMP by catalyzing the attack of water at the alpha-P atom. Involved in the biosynthesis of lipid A, a phosphorylated glycolipid that anchors the lipopolysaccharide to the outer membrane of the cell.</text>
</comment>
<comment type="catalytic activity">
    <reaction evidence="1">
        <text>UDP-2-N,3-O-bis[(3R)-3-hydroxytetradecanoyl]-alpha-D-glucosamine + H2O = 2-N,3-O-bis[(3R)-3-hydroxytetradecanoyl]-alpha-D-glucosaminyl 1-phosphate + UMP + 2 H(+)</text>
        <dbReference type="Rhea" id="RHEA:25213"/>
        <dbReference type="ChEBI" id="CHEBI:15377"/>
        <dbReference type="ChEBI" id="CHEBI:15378"/>
        <dbReference type="ChEBI" id="CHEBI:57865"/>
        <dbReference type="ChEBI" id="CHEBI:57957"/>
        <dbReference type="ChEBI" id="CHEBI:78847"/>
        <dbReference type="EC" id="3.6.1.54"/>
    </reaction>
</comment>
<comment type="cofactor">
    <cofactor evidence="1">
        <name>Mn(2+)</name>
        <dbReference type="ChEBI" id="CHEBI:29035"/>
    </cofactor>
    <text evidence="1">Binds 2 Mn(2+) ions per subunit in a binuclear metal center.</text>
</comment>
<comment type="pathway">
    <text evidence="1">Glycolipid biosynthesis; lipid IV(A) biosynthesis; lipid IV(A) from (3R)-3-hydroxytetradecanoyl-[acyl-carrier-protein] and UDP-N-acetyl-alpha-D-glucosamine: step 4/6.</text>
</comment>
<comment type="subcellular location">
    <subcellularLocation>
        <location evidence="1">Cell inner membrane</location>
        <topology evidence="1">Peripheral membrane protein</topology>
        <orientation evidence="1">Cytoplasmic side</orientation>
    </subcellularLocation>
</comment>
<comment type="similarity">
    <text evidence="1">Belongs to the LpxH family.</text>
</comment>
<reference key="1">
    <citation type="journal article" date="2006" name="J. Bacteriol.">
        <title>Complete genome sequence of Yersinia pestis strains Antiqua and Nepal516: evidence of gene reduction in an emerging pathogen.</title>
        <authorList>
            <person name="Chain P.S.G."/>
            <person name="Hu P."/>
            <person name="Malfatti S.A."/>
            <person name="Radnedge L."/>
            <person name="Larimer F."/>
            <person name="Vergez L.M."/>
            <person name="Worsham P."/>
            <person name="Chu M.C."/>
            <person name="Andersen G.L."/>
        </authorList>
    </citation>
    <scope>NUCLEOTIDE SEQUENCE [LARGE SCALE GENOMIC DNA]</scope>
    <source>
        <strain>Nepal516</strain>
    </source>
</reference>
<reference key="2">
    <citation type="submission" date="2009-04" db="EMBL/GenBank/DDBJ databases">
        <title>Yersinia pestis Nepal516A whole genome shotgun sequencing project.</title>
        <authorList>
            <person name="Plunkett G. III"/>
            <person name="Anderson B.D."/>
            <person name="Baumler D.J."/>
            <person name="Burland V."/>
            <person name="Cabot E.L."/>
            <person name="Glasner J.D."/>
            <person name="Mau B."/>
            <person name="Neeno-Eckwall E."/>
            <person name="Perna N.T."/>
            <person name="Munk A.C."/>
            <person name="Tapia R."/>
            <person name="Green L.D."/>
            <person name="Rogers Y.C."/>
            <person name="Detter J.C."/>
            <person name="Bruce D.C."/>
            <person name="Brettin T.S."/>
        </authorList>
    </citation>
    <scope>NUCLEOTIDE SEQUENCE [LARGE SCALE GENOMIC DNA]</scope>
    <source>
        <strain>Nepal516</strain>
    </source>
</reference>
<proteinExistence type="inferred from homology"/>
<dbReference type="EC" id="3.6.1.54" evidence="1"/>
<dbReference type="EMBL" id="CP000305">
    <property type="protein sequence ID" value="ABG17347.1"/>
    <property type="molecule type" value="Genomic_DNA"/>
</dbReference>
<dbReference type="EMBL" id="ACNQ01000008">
    <property type="protein sequence ID" value="EEO77431.1"/>
    <property type="molecule type" value="Genomic_DNA"/>
</dbReference>
<dbReference type="RefSeq" id="WP_002208568.1">
    <property type="nucleotide sequence ID" value="NZ_ACNQ01000008.1"/>
</dbReference>
<dbReference type="SMR" id="Q1CKY3"/>
<dbReference type="KEGG" id="ypn:YPN_1015"/>
<dbReference type="HOGENOM" id="CLU_074586_0_0_6"/>
<dbReference type="UniPathway" id="UPA00359">
    <property type="reaction ID" value="UER00480"/>
</dbReference>
<dbReference type="Proteomes" id="UP000008936">
    <property type="component" value="Chromosome"/>
</dbReference>
<dbReference type="GO" id="GO:0005737">
    <property type="term" value="C:cytoplasm"/>
    <property type="evidence" value="ECO:0007669"/>
    <property type="project" value="InterPro"/>
</dbReference>
<dbReference type="GO" id="GO:0019897">
    <property type="term" value="C:extrinsic component of plasma membrane"/>
    <property type="evidence" value="ECO:0007669"/>
    <property type="project" value="UniProtKB-UniRule"/>
</dbReference>
<dbReference type="GO" id="GO:0030145">
    <property type="term" value="F:manganese ion binding"/>
    <property type="evidence" value="ECO:0007669"/>
    <property type="project" value="UniProtKB-UniRule"/>
</dbReference>
<dbReference type="GO" id="GO:0008758">
    <property type="term" value="F:UDP-2,3-diacylglucosamine hydrolase activity"/>
    <property type="evidence" value="ECO:0007669"/>
    <property type="project" value="UniProtKB-UniRule"/>
</dbReference>
<dbReference type="GO" id="GO:0009245">
    <property type="term" value="P:lipid A biosynthetic process"/>
    <property type="evidence" value="ECO:0007669"/>
    <property type="project" value="UniProtKB-UniRule"/>
</dbReference>
<dbReference type="CDD" id="cd07398">
    <property type="entry name" value="MPP_YbbF-LpxH"/>
    <property type="match status" value="1"/>
</dbReference>
<dbReference type="FunFam" id="3.60.21.10:FF:000074">
    <property type="entry name" value="UDP-2,3-diacylglucosamine hydrolase"/>
    <property type="match status" value="1"/>
</dbReference>
<dbReference type="Gene3D" id="3.60.21.10">
    <property type="match status" value="1"/>
</dbReference>
<dbReference type="HAMAP" id="MF_00575">
    <property type="entry name" value="LpxH"/>
    <property type="match status" value="1"/>
</dbReference>
<dbReference type="InterPro" id="IPR004843">
    <property type="entry name" value="Calcineurin-like_PHP_ApaH"/>
</dbReference>
<dbReference type="InterPro" id="IPR043461">
    <property type="entry name" value="LpxH-like"/>
</dbReference>
<dbReference type="InterPro" id="IPR029052">
    <property type="entry name" value="Metallo-depent_PP-like"/>
</dbReference>
<dbReference type="InterPro" id="IPR010138">
    <property type="entry name" value="UDP-diacylglucosamine_Hdrlase"/>
</dbReference>
<dbReference type="NCBIfam" id="TIGR01854">
    <property type="entry name" value="lipid_A_lpxH"/>
    <property type="match status" value="1"/>
</dbReference>
<dbReference type="NCBIfam" id="NF003743">
    <property type="entry name" value="PRK05340.1"/>
    <property type="match status" value="1"/>
</dbReference>
<dbReference type="PANTHER" id="PTHR34990:SF1">
    <property type="entry name" value="UDP-2,3-DIACYLGLUCOSAMINE HYDROLASE"/>
    <property type="match status" value="1"/>
</dbReference>
<dbReference type="PANTHER" id="PTHR34990">
    <property type="entry name" value="UDP-2,3-DIACYLGLUCOSAMINE HYDROLASE-RELATED"/>
    <property type="match status" value="1"/>
</dbReference>
<dbReference type="Pfam" id="PF00149">
    <property type="entry name" value="Metallophos"/>
    <property type="match status" value="1"/>
</dbReference>
<dbReference type="SUPFAM" id="SSF56300">
    <property type="entry name" value="Metallo-dependent phosphatases"/>
    <property type="match status" value="1"/>
</dbReference>
<name>LPXH_YERPN</name>
<gene>
    <name evidence="1" type="primary">lpxH</name>
    <name type="ordered locus">YPN_1015</name>
    <name type="ORF">YP516_1098</name>
</gene>
<keyword id="KW-0997">Cell inner membrane</keyword>
<keyword id="KW-1003">Cell membrane</keyword>
<keyword id="KW-0378">Hydrolase</keyword>
<keyword id="KW-0441">Lipid A biosynthesis</keyword>
<keyword id="KW-0444">Lipid biosynthesis</keyword>
<keyword id="KW-0443">Lipid metabolism</keyword>
<keyword id="KW-0464">Manganese</keyword>
<keyword id="KW-0472">Membrane</keyword>
<keyword id="KW-0479">Metal-binding</keyword>